<dbReference type="EC" id="2.7.7.72" evidence="1"/>
<dbReference type="EC" id="3.1.3.-" evidence="1"/>
<dbReference type="EC" id="3.1.4.-" evidence="1"/>
<dbReference type="EMBL" id="CU928161">
    <property type="protein sequence ID" value="CAR04683.1"/>
    <property type="molecule type" value="Genomic_DNA"/>
</dbReference>
<dbReference type="RefSeq" id="WP_000708479.1">
    <property type="nucleotide sequence ID" value="NC_011742.1"/>
</dbReference>
<dbReference type="SMR" id="B7MAD3"/>
<dbReference type="KEGG" id="ecz:ECS88_3454"/>
<dbReference type="HOGENOM" id="CLU_015961_1_1_6"/>
<dbReference type="Proteomes" id="UP000000747">
    <property type="component" value="Chromosome"/>
</dbReference>
<dbReference type="GO" id="GO:0005524">
    <property type="term" value="F:ATP binding"/>
    <property type="evidence" value="ECO:0007669"/>
    <property type="project" value="UniProtKB-UniRule"/>
</dbReference>
<dbReference type="GO" id="GO:0004810">
    <property type="term" value="F:CCA tRNA nucleotidyltransferase activity"/>
    <property type="evidence" value="ECO:0007669"/>
    <property type="project" value="UniProtKB-UniRule"/>
</dbReference>
<dbReference type="GO" id="GO:0004112">
    <property type="term" value="F:cyclic-nucleotide phosphodiesterase activity"/>
    <property type="evidence" value="ECO:0007669"/>
    <property type="project" value="UniProtKB-UniRule"/>
</dbReference>
<dbReference type="GO" id="GO:0000287">
    <property type="term" value="F:magnesium ion binding"/>
    <property type="evidence" value="ECO:0007669"/>
    <property type="project" value="UniProtKB-UniRule"/>
</dbReference>
<dbReference type="GO" id="GO:0016791">
    <property type="term" value="F:phosphatase activity"/>
    <property type="evidence" value="ECO:0007669"/>
    <property type="project" value="UniProtKB-UniRule"/>
</dbReference>
<dbReference type="GO" id="GO:0000049">
    <property type="term" value="F:tRNA binding"/>
    <property type="evidence" value="ECO:0007669"/>
    <property type="project" value="UniProtKB-UniRule"/>
</dbReference>
<dbReference type="GO" id="GO:0042245">
    <property type="term" value="P:RNA repair"/>
    <property type="evidence" value="ECO:0007669"/>
    <property type="project" value="UniProtKB-KW"/>
</dbReference>
<dbReference type="GO" id="GO:0001680">
    <property type="term" value="P:tRNA 3'-terminal CCA addition"/>
    <property type="evidence" value="ECO:0007669"/>
    <property type="project" value="UniProtKB-UniRule"/>
</dbReference>
<dbReference type="CDD" id="cd00077">
    <property type="entry name" value="HDc"/>
    <property type="match status" value="1"/>
</dbReference>
<dbReference type="CDD" id="cd05398">
    <property type="entry name" value="NT_ClassII-CCAase"/>
    <property type="match status" value="1"/>
</dbReference>
<dbReference type="FunFam" id="1.10.3090.10:FF:000001">
    <property type="entry name" value="Multifunctional CCA protein"/>
    <property type="match status" value="1"/>
</dbReference>
<dbReference type="FunFam" id="3.30.460.10:FF:000016">
    <property type="entry name" value="Multifunctional CCA protein"/>
    <property type="match status" value="1"/>
</dbReference>
<dbReference type="Gene3D" id="3.30.460.10">
    <property type="entry name" value="Beta Polymerase, domain 2"/>
    <property type="match status" value="1"/>
</dbReference>
<dbReference type="Gene3D" id="1.10.3090.10">
    <property type="entry name" value="cca-adding enzyme, domain 2"/>
    <property type="match status" value="1"/>
</dbReference>
<dbReference type="HAMAP" id="MF_01261">
    <property type="entry name" value="CCA_bact_type1"/>
    <property type="match status" value="1"/>
</dbReference>
<dbReference type="HAMAP" id="MF_01262">
    <property type="entry name" value="CCA_bact_type2"/>
    <property type="match status" value="1"/>
</dbReference>
<dbReference type="InterPro" id="IPR012006">
    <property type="entry name" value="CCA_bact"/>
</dbReference>
<dbReference type="InterPro" id="IPR003607">
    <property type="entry name" value="HD/PDEase_dom"/>
</dbReference>
<dbReference type="InterPro" id="IPR006674">
    <property type="entry name" value="HD_domain"/>
</dbReference>
<dbReference type="InterPro" id="IPR043519">
    <property type="entry name" value="NT_sf"/>
</dbReference>
<dbReference type="InterPro" id="IPR002646">
    <property type="entry name" value="PolA_pol_head_dom"/>
</dbReference>
<dbReference type="InterPro" id="IPR032828">
    <property type="entry name" value="PolyA_RNA-bd"/>
</dbReference>
<dbReference type="InterPro" id="IPR050124">
    <property type="entry name" value="tRNA_CCA-adding_enzyme"/>
</dbReference>
<dbReference type="NCBIfam" id="NF008137">
    <property type="entry name" value="PRK10885.1"/>
    <property type="match status" value="1"/>
</dbReference>
<dbReference type="PANTHER" id="PTHR47545">
    <property type="entry name" value="MULTIFUNCTIONAL CCA PROTEIN"/>
    <property type="match status" value="1"/>
</dbReference>
<dbReference type="PANTHER" id="PTHR47545:SF1">
    <property type="entry name" value="MULTIFUNCTIONAL CCA PROTEIN"/>
    <property type="match status" value="1"/>
</dbReference>
<dbReference type="Pfam" id="PF01966">
    <property type="entry name" value="HD"/>
    <property type="match status" value="1"/>
</dbReference>
<dbReference type="Pfam" id="PF01743">
    <property type="entry name" value="PolyA_pol"/>
    <property type="match status" value="1"/>
</dbReference>
<dbReference type="Pfam" id="PF12627">
    <property type="entry name" value="PolyA_pol_RNAbd"/>
    <property type="match status" value="1"/>
</dbReference>
<dbReference type="PIRSF" id="PIRSF000813">
    <property type="entry name" value="CCA_bact"/>
    <property type="match status" value="1"/>
</dbReference>
<dbReference type="SUPFAM" id="SSF81301">
    <property type="entry name" value="Nucleotidyltransferase"/>
    <property type="match status" value="1"/>
</dbReference>
<dbReference type="SUPFAM" id="SSF81891">
    <property type="entry name" value="Poly A polymerase C-terminal region-like"/>
    <property type="match status" value="1"/>
</dbReference>
<dbReference type="PROSITE" id="PS51831">
    <property type="entry name" value="HD"/>
    <property type="match status" value="1"/>
</dbReference>
<accession>B7MAD3</accession>
<comment type="function">
    <text evidence="1">Catalyzes the addition and repair of the essential 3'-terminal CCA sequence in tRNAs without using a nucleic acid template. Adds these three nucleotides in the order of C, C, and A to the tRNA nucleotide-73, using CTP and ATP as substrates and producing inorganic pyrophosphate. tRNA 3'-terminal CCA addition is required both for tRNA processing and repair. Also involved in tRNA surveillance by mediating tandem CCA addition to generate a CCACCA at the 3' terminus of unstable tRNAs. While stable tRNAs receive only 3'-terminal CCA, unstable tRNAs are marked with CCACCA and rapidly degraded.</text>
</comment>
<comment type="catalytic activity">
    <reaction evidence="1">
        <text>a tRNA precursor + 2 CTP + ATP = a tRNA with a 3' CCA end + 3 diphosphate</text>
        <dbReference type="Rhea" id="RHEA:14433"/>
        <dbReference type="Rhea" id="RHEA-COMP:10465"/>
        <dbReference type="Rhea" id="RHEA-COMP:10468"/>
        <dbReference type="ChEBI" id="CHEBI:30616"/>
        <dbReference type="ChEBI" id="CHEBI:33019"/>
        <dbReference type="ChEBI" id="CHEBI:37563"/>
        <dbReference type="ChEBI" id="CHEBI:74896"/>
        <dbReference type="ChEBI" id="CHEBI:83071"/>
        <dbReference type="EC" id="2.7.7.72"/>
    </reaction>
</comment>
<comment type="catalytic activity">
    <reaction evidence="1">
        <text>a tRNA with a 3' CCA end + 2 CTP + ATP = a tRNA with a 3' CCACCA end + 3 diphosphate</text>
        <dbReference type="Rhea" id="RHEA:76235"/>
        <dbReference type="Rhea" id="RHEA-COMP:10468"/>
        <dbReference type="Rhea" id="RHEA-COMP:18655"/>
        <dbReference type="ChEBI" id="CHEBI:30616"/>
        <dbReference type="ChEBI" id="CHEBI:33019"/>
        <dbReference type="ChEBI" id="CHEBI:37563"/>
        <dbReference type="ChEBI" id="CHEBI:83071"/>
        <dbReference type="ChEBI" id="CHEBI:195187"/>
    </reaction>
    <physiologicalReaction direction="left-to-right" evidence="1">
        <dbReference type="Rhea" id="RHEA:76236"/>
    </physiologicalReaction>
</comment>
<comment type="cofactor">
    <cofactor evidence="1">
        <name>Mg(2+)</name>
        <dbReference type="ChEBI" id="CHEBI:18420"/>
    </cofactor>
    <text evidence="1">Magnesium is required for nucleotidyltransferase activity.</text>
</comment>
<comment type="cofactor">
    <cofactor evidence="1">
        <name>Ni(2+)</name>
        <dbReference type="ChEBI" id="CHEBI:49786"/>
    </cofactor>
    <text evidence="1">Nickel for phosphatase activity.</text>
</comment>
<comment type="subunit">
    <text evidence="1">Monomer. Can also form homodimers and oligomers.</text>
</comment>
<comment type="domain">
    <text evidence="1">Comprises two domains: an N-terminal domain containing the nucleotidyltransferase activity and a C-terminal HD domain associated with both phosphodiesterase and phosphatase activities.</text>
</comment>
<comment type="miscellaneous">
    <text evidence="1">A single active site specifically recognizes both ATP and CTP and is responsible for their addition.</text>
</comment>
<comment type="similarity">
    <text evidence="1">Belongs to the tRNA nucleotidyltransferase/poly(A) polymerase family. Bacterial CCA-adding enzyme type 1 subfamily.</text>
</comment>
<feature type="chain" id="PRO_1000140030" description="Multifunctional CCA protein">
    <location>
        <begin position="1"/>
        <end position="412"/>
    </location>
</feature>
<feature type="domain" description="HD" evidence="1">
    <location>
        <begin position="228"/>
        <end position="329"/>
    </location>
</feature>
<feature type="binding site" evidence="1">
    <location>
        <position position="8"/>
    </location>
    <ligand>
        <name>ATP</name>
        <dbReference type="ChEBI" id="CHEBI:30616"/>
    </ligand>
</feature>
<feature type="binding site" evidence="1">
    <location>
        <position position="8"/>
    </location>
    <ligand>
        <name>CTP</name>
        <dbReference type="ChEBI" id="CHEBI:37563"/>
    </ligand>
</feature>
<feature type="binding site" evidence="1">
    <location>
        <position position="11"/>
    </location>
    <ligand>
        <name>ATP</name>
        <dbReference type="ChEBI" id="CHEBI:30616"/>
    </ligand>
</feature>
<feature type="binding site" evidence="1">
    <location>
        <position position="11"/>
    </location>
    <ligand>
        <name>CTP</name>
        <dbReference type="ChEBI" id="CHEBI:37563"/>
    </ligand>
</feature>
<feature type="binding site" evidence="1">
    <location>
        <position position="21"/>
    </location>
    <ligand>
        <name>Mg(2+)</name>
        <dbReference type="ChEBI" id="CHEBI:18420"/>
    </ligand>
</feature>
<feature type="binding site" evidence="1">
    <location>
        <position position="23"/>
    </location>
    <ligand>
        <name>Mg(2+)</name>
        <dbReference type="ChEBI" id="CHEBI:18420"/>
    </ligand>
</feature>
<feature type="binding site" evidence="1">
    <location>
        <position position="91"/>
    </location>
    <ligand>
        <name>ATP</name>
        <dbReference type="ChEBI" id="CHEBI:30616"/>
    </ligand>
</feature>
<feature type="binding site" evidence="1">
    <location>
        <position position="91"/>
    </location>
    <ligand>
        <name>CTP</name>
        <dbReference type="ChEBI" id="CHEBI:37563"/>
    </ligand>
</feature>
<feature type="binding site" evidence="1">
    <location>
        <position position="137"/>
    </location>
    <ligand>
        <name>ATP</name>
        <dbReference type="ChEBI" id="CHEBI:30616"/>
    </ligand>
</feature>
<feature type="binding site" evidence="1">
    <location>
        <position position="137"/>
    </location>
    <ligand>
        <name>CTP</name>
        <dbReference type="ChEBI" id="CHEBI:37563"/>
    </ligand>
</feature>
<feature type="binding site" evidence="1">
    <location>
        <position position="140"/>
    </location>
    <ligand>
        <name>ATP</name>
        <dbReference type="ChEBI" id="CHEBI:30616"/>
    </ligand>
</feature>
<feature type="binding site" evidence="1">
    <location>
        <position position="140"/>
    </location>
    <ligand>
        <name>CTP</name>
        <dbReference type="ChEBI" id="CHEBI:37563"/>
    </ligand>
</feature>
<reference key="1">
    <citation type="journal article" date="2009" name="PLoS Genet.">
        <title>Organised genome dynamics in the Escherichia coli species results in highly diverse adaptive paths.</title>
        <authorList>
            <person name="Touchon M."/>
            <person name="Hoede C."/>
            <person name="Tenaillon O."/>
            <person name="Barbe V."/>
            <person name="Baeriswyl S."/>
            <person name="Bidet P."/>
            <person name="Bingen E."/>
            <person name="Bonacorsi S."/>
            <person name="Bouchier C."/>
            <person name="Bouvet O."/>
            <person name="Calteau A."/>
            <person name="Chiapello H."/>
            <person name="Clermont O."/>
            <person name="Cruveiller S."/>
            <person name="Danchin A."/>
            <person name="Diard M."/>
            <person name="Dossat C."/>
            <person name="Karoui M.E."/>
            <person name="Frapy E."/>
            <person name="Garry L."/>
            <person name="Ghigo J.M."/>
            <person name="Gilles A.M."/>
            <person name="Johnson J."/>
            <person name="Le Bouguenec C."/>
            <person name="Lescat M."/>
            <person name="Mangenot S."/>
            <person name="Martinez-Jehanne V."/>
            <person name="Matic I."/>
            <person name="Nassif X."/>
            <person name="Oztas S."/>
            <person name="Petit M.A."/>
            <person name="Pichon C."/>
            <person name="Rouy Z."/>
            <person name="Ruf C.S."/>
            <person name="Schneider D."/>
            <person name="Tourret J."/>
            <person name="Vacherie B."/>
            <person name="Vallenet D."/>
            <person name="Medigue C."/>
            <person name="Rocha E.P.C."/>
            <person name="Denamur E."/>
        </authorList>
    </citation>
    <scope>NUCLEOTIDE SEQUENCE [LARGE SCALE GENOMIC DNA]</scope>
    <source>
        <strain>S88 / ExPEC</strain>
    </source>
</reference>
<keyword id="KW-0067">ATP-binding</keyword>
<keyword id="KW-0378">Hydrolase</keyword>
<keyword id="KW-0460">Magnesium</keyword>
<keyword id="KW-0479">Metal-binding</keyword>
<keyword id="KW-0511">Multifunctional enzyme</keyword>
<keyword id="KW-0533">Nickel</keyword>
<keyword id="KW-0547">Nucleotide-binding</keyword>
<keyword id="KW-0548">Nucleotidyltransferase</keyword>
<keyword id="KW-1185">Reference proteome</keyword>
<keyword id="KW-0692">RNA repair</keyword>
<keyword id="KW-0694">RNA-binding</keyword>
<keyword id="KW-0808">Transferase</keyword>
<keyword id="KW-0819">tRNA processing</keyword>
<organism>
    <name type="scientific">Escherichia coli O45:K1 (strain S88 / ExPEC)</name>
    <dbReference type="NCBI Taxonomy" id="585035"/>
    <lineage>
        <taxon>Bacteria</taxon>
        <taxon>Pseudomonadati</taxon>
        <taxon>Pseudomonadota</taxon>
        <taxon>Gammaproteobacteria</taxon>
        <taxon>Enterobacterales</taxon>
        <taxon>Enterobacteriaceae</taxon>
        <taxon>Escherichia</taxon>
    </lineage>
</organism>
<gene>
    <name evidence="1" type="primary">cca</name>
    <name type="ordered locus">ECS88_3454</name>
</gene>
<evidence type="ECO:0000255" key="1">
    <source>
        <dbReference type="HAMAP-Rule" id="MF_01261"/>
    </source>
</evidence>
<protein>
    <recommendedName>
        <fullName evidence="1">Multifunctional CCA protein</fullName>
    </recommendedName>
    <domain>
        <recommendedName>
            <fullName evidence="1">CCA-adding enzyme</fullName>
            <ecNumber evidence="1">2.7.7.72</ecNumber>
        </recommendedName>
        <alternativeName>
            <fullName evidence="1">CCA tRNA nucleotidyltransferase</fullName>
        </alternativeName>
        <alternativeName>
            <fullName evidence="1">tRNA CCA-pyrophosphorylase</fullName>
        </alternativeName>
        <alternativeName>
            <fullName evidence="1">tRNA adenylyl-/cytidylyl-transferase</fullName>
        </alternativeName>
        <alternativeName>
            <fullName evidence="1">tRNA nucleotidyltransferase</fullName>
        </alternativeName>
        <alternativeName>
            <fullName evidence="1">tRNA-NT</fullName>
        </alternativeName>
    </domain>
    <domain>
        <recommendedName>
            <fullName evidence="1">2'-nucleotidase</fullName>
            <ecNumber evidence="1">3.1.3.-</ecNumber>
        </recommendedName>
    </domain>
    <domain>
        <recommendedName>
            <fullName evidence="1">2',3'-cyclic phosphodiesterase</fullName>
            <ecNumber evidence="1">3.1.4.-</ecNumber>
        </recommendedName>
    </domain>
    <domain>
        <recommendedName>
            <fullName evidence="1">Phosphatase</fullName>
            <ecNumber evidence="1">3.1.3.-</ecNumber>
        </recommendedName>
    </domain>
</protein>
<name>CCA_ECO45</name>
<sequence length="412" mass="46538">MKIYLVGGAVRDALLGLPVKDRDWVVVGSTPQEMLDAGYQQVGRDFPVFLHPQTHEEYALARTERKSGSGYTGFTCYAAPDVTLEDDLKRRDLTINALAQDDNGEIIDPYNGLGDLQNRLLRHVSPAFGEDPLRVLRVARFAARYAHLCFRIADETLALMREMTHAGELEHLTPERVWKETENALTTRNPQVFFQVLRDCGALRVLFPEIDALFGVPAPARWHPEIDTGIHTLMTLSMAAMLSPQVDVRFATLCHDLGKGLTPPELWPRHHGHGPAGVKLVEQLCQRLRVPNEIRDLARLVAEFHDLIHTFPMLNPKTIVKLFDSIDAWRKPQRVEQLALTSEADVRGRTGFESADYPQGRWLREAWEVAQSVPTKAVVEAGFKGVEIREELTRRRIAAVAGWKEQRCPKPE</sequence>
<proteinExistence type="inferred from homology"/>